<reference key="1">
    <citation type="submission" date="2004-05" db="EMBL/GenBank/DDBJ databases">
        <title>Western taipan venom gland cDNA encoding microlepidin.</title>
        <authorList>
            <person name="Filippovich I."/>
            <person name="Sorokina N.I."/>
        </authorList>
    </citation>
    <scope>NUCLEOTIDE SEQUENCE [MRNA]</scope>
    <source>
        <tissue>Venom gland</tissue>
    </source>
</reference>
<protein>
    <recommendedName>
        <fullName>Kunitz-type serine protease inhibitor microlepidin-1</fullName>
    </recommendedName>
</protein>
<proteinExistence type="evidence at transcript level"/>
<accession>Q6ITB5</accession>
<evidence type="ECO:0000250" key="1"/>
<evidence type="ECO:0000255" key="2"/>
<evidence type="ECO:0000255" key="3">
    <source>
        <dbReference type="PROSITE-ProRule" id="PRU00031"/>
    </source>
</evidence>
<evidence type="ECO:0000305" key="4"/>
<name>VKT1_OXYMI</name>
<keyword id="KW-1015">Disulfide bond</keyword>
<keyword id="KW-0646">Protease inhibitor</keyword>
<keyword id="KW-0964">Secreted</keyword>
<keyword id="KW-0722">Serine protease inhibitor</keyword>
<keyword id="KW-0732">Signal</keyword>
<organism>
    <name type="scientific">Oxyuranus microlepidotus</name>
    <name type="common">Inland taipan</name>
    <name type="synonym">Diemenia microlepidota</name>
    <dbReference type="NCBI Taxonomy" id="111177"/>
    <lineage>
        <taxon>Eukaryota</taxon>
        <taxon>Metazoa</taxon>
        <taxon>Chordata</taxon>
        <taxon>Craniata</taxon>
        <taxon>Vertebrata</taxon>
        <taxon>Euteleostomi</taxon>
        <taxon>Lepidosauria</taxon>
        <taxon>Squamata</taxon>
        <taxon>Bifurcata</taxon>
        <taxon>Unidentata</taxon>
        <taxon>Episquamata</taxon>
        <taxon>Toxicofera</taxon>
        <taxon>Serpentes</taxon>
        <taxon>Colubroidea</taxon>
        <taxon>Elapidae</taxon>
        <taxon>Hydrophiinae</taxon>
        <taxon>Oxyuranus</taxon>
    </lineage>
</organism>
<dbReference type="EMBL" id="AY626930">
    <property type="protein sequence ID" value="AAT45406.1"/>
    <property type="molecule type" value="mRNA"/>
</dbReference>
<dbReference type="SMR" id="Q6ITB5"/>
<dbReference type="MEROPS" id="I02.052"/>
<dbReference type="GO" id="GO:0005615">
    <property type="term" value="C:extracellular space"/>
    <property type="evidence" value="ECO:0007669"/>
    <property type="project" value="TreeGrafter"/>
</dbReference>
<dbReference type="GO" id="GO:0004867">
    <property type="term" value="F:serine-type endopeptidase inhibitor activity"/>
    <property type="evidence" value="ECO:0007669"/>
    <property type="project" value="UniProtKB-KW"/>
</dbReference>
<dbReference type="CDD" id="cd22594">
    <property type="entry name" value="Kunitz_textilinin-like"/>
    <property type="match status" value="1"/>
</dbReference>
<dbReference type="FunFam" id="4.10.410.10:FF:000021">
    <property type="entry name" value="Serine protease inhibitor, putative"/>
    <property type="match status" value="1"/>
</dbReference>
<dbReference type="Gene3D" id="4.10.410.10">
    <property type="entry name" value="Pancreatic trypsin inhibitor Kunitz domain"/>
    <property type="match status" value="1"/>
</dbReference>
<dbReference type="InterPro" id="IPR002223">
    <property type="entry name" value="Kunitz_BPTI"/>
</dbReference>
<dbReference type="InterPro" id="IPR036880">
    <property type="entry name" value="Kunitz_BPTI_sf"/>
</dbReference>
<dbReference type="InterPro" id="IPR020901">
    <property type="entry name" value="Prtase_inh_Kunz-CS"/>
</dbReference>
<dbReference type="InterPro" id="IPR050098">
    <property type="entry name" value="TFPI/VKTCI-like"/>
</dbReference>
<dbReference type="PANTHER" id="PTHR10083">
    <property type="entry name" value="KUNITZ-TYPE PROTEASE INHIBITOR-RELATED"/>
    <property type="match status" value="1"/>
</dbReference>
<dbReference type="PANTHER" id="PTHR10083:SF376">
    <property type="entry name" value="SERINE PEPTIDASE INHIBITOR, KUNITZ TYPE, 3"/>
    <property type="match status" value="1"/>
</dbReference>
<dbReference type="Pfam" id="PF00014">
    <property type="entry name" value="Kunitz_BPTI"/>
    <property type="match status" value="1"/>
</dbReference>
<dbReference type="PRINTS" id="PR00759">
    <property type="entry name" value="BASICPTASE"/>
</dbReference>
<dbReference type="SMART" id="SM00131">
    <property type="entry name" value="KU"/>
    <property type="match status" value="1"/>
</dbReference>
<dbReference type="SUPFAM" id="SSF57362">
    <property type="entry name" value="BPTI-like"/>
    <property type="match status" value="1"/>
</dbReference>
<dbReference type="PROSITE" id="PS00280">
    <property type="entry name" value="BPTI_KUNITZ_1"/>
    <property type="match status" value="1"/>
</dbReference>
<dbReference type="PROSITE" id="PS50279">
    <property type="entry name" value="BPTI_KUNITZ_2"/>
    <property type="match status" value="1"/>
</dbReference>
<feature type="signal peptide" evidence="2">
    <location>
        <begin position="1"/>
        <end position="24"/>
    </location>
</feature>
<feature type="chain" id="PRO_0000376891" description="Kunitz-type serine protease inhibitor microlepidin-1">
    <location>
        <begin position="25"/>
        <end position="83"/>
    </location>
</feature>
<feature type="domain" description="BPTI/Kunitz inhibitor" evidence="3">
    <location>
        <begin position="31"/>
        <end position="81"/>
    </location>
</feature>
<feature type="site" description="Reactive bond for trypsin" evidence="1">
    <location>
        <begin position="41"/>
        <end position="42"/>
    </location>
</feature>
<feature type="disulfide bond" evidence="3">
    <location>
        <begin position="31"/>
        <end position="81"/>
    </location>
</feature>
<feature type="disulfide bond" evidence="3">
    <location>
        <begin position="40"/>
        <end position="64"/>
    </location>
</feature>
<feature type="disulfide bond" evidence="3">
    <location>
        <begin position="56"/>
        <end position="77"/>
    </location>
</feature>
<comment type="function">
    <text evidence="1">Serine protease inhibitor.</text>
</comment>
<comment type="subcellular location">
    <subcellularLocation>
        <location evidence="1">Secreted</location>
    </subcellularLocation>
</comment>
<comment type="tissue specificity">
    <text>Expressed by the venom gland.</text>
</comment>
<comment type="similarity">
    <text evidence="4">Belongs to the venom Kunitz-type family.</text>
</comment>
<sequence length="83" mass="9040">MSSGGLLLLLGLLTLWEVLTPVSSKDRPDLCELPADTGPCRVGFPSFYYNPDEKKCLEFIYGGCEGNANNFITKEECESTCAA</sequence>